<dbReference type="EC" id="2.5.1.75" evidence="1"/>
<dbReference type="EMBL" id="CP001079">
    <property type="protein sequence ID" value="ACM49406.1"/>
    <property type="molecule type" value="Genomic_DNA"/>
</dbReference>
<dbReference type="RefSeq" id="WP_010270171.1">
    <property type="nucleotide sequence ID" value="NZ_AFMS01000192.1"/>
</dbReference>
<dbReference type="SMR" id="B9KIU4"/>
<dbReference type="STRING" id="320483.AMF_558"/>
<dbReference type="GeneID" id="7398172"/>
<dbReference type="KEGG" id="amf:AMF_558"/>
<dbReference type="PATRIC" id="fig|320483.3.peg.650"/>
<dbReference type="eggNOG" id="COG0324">
    <property type="taxonomic scope" value="Bacteria"/>
</dbReference>
<dbReference type="HOGENOM" id="CLU_032616_0_1_5"/>
<dbReference type="Proteomes" id="UP000007307">
    <property type="component" value="Chromosome"/>
</dbReference>
<dbReference type="GO" id="GO:0005524">
    <property type="term" value="F:ATP binding"/>
    <property type="evidence" value="ECO:0007669"/>
    <property type="project" value="UniProtKB-UniRule"/>
</dbReference>
<dbReference type="GO" id="GO:0052381">
    <property type="term" value="F:tRNA dimethylallyltransferase activity"/>
    <property type="evidence" value="ECO:0007669"/>
    <property type="project" value="UniProtKB-UniRule"/>
</dbReference>
<dbReference type="GO" id="GO:0006400">
    <property type="term" value="P:tRNA modification"/>
    <property type="evidence" value="ECO:0007669"/>
    <property type="project" value="TreeGrafter"/>
</dbReference>
<dbReference type="Gene3D" id="1.10.20.140">
    <property type="match status" value="1"/>
</dbReference>
<dbReference type="Gene3D" id="3.40.50.300">
    <property type="entry name" value="P-loop containing nucleotide triphosphate hydrolases"/>
    <property type="match status" value="1"/>
</dbReference>
<dbReference type="HAMAP" id="MF_00185">
    <property type="entry name" value="IPP_trans"/>
    <property type="match status" value="1"/>
</dbReference>
<dbReference type="InterPro" id="IPR039657">
    <property type="entry name" value="Dimethylallyltransferase"/>
</dbReference>
<dbReference type="InterPro" id="IPR018022">
    <property type="entry name" value="IPT"/>
</dbReference>
<dbReference type="InterPro" id="IPR027417">
    <property type="entry name" value="P-loop_NTPase"/>
</dbReference>
<dbReference type="NCBIfam" id="TIGR00174">
    <property type="entry name" value="miaA"/>
    <property type="match status" value="1"/>
</dbReference>
<dbReference type="PANTHER" id="PTHR11088">
    <property type="entry name" value="TRNA DIMETHYLALLYLTRANSFERASE"/>
    <property type="match status" value="1"/>
</dbReference>
<dbReference type="PANTHER" id="PTHR11088:SF60">
    <property type="entry name" value="TRNA DIMETHYLALLYLTRANSFERASE"/>
    <property type="match status" value="1"/>
</dbReference>
<dbReference type="Pfam" id="PF01715">
    <property type="entry name" value="IPPT"/>
    <property type="match status" value="1"/>
</dbReference>
<dbReference type="SUPFAM" id="SSF52540">
    <property type="entry name" value="P-loop containing nucleoside triphosphate hydrolases"/>
    <property type="match status" value="2"/>
</dbReference>
<organism>
    <name type="scientific">Anaplasma marginale (strain Florida)</name>
    <dbReference type="NCBI Taxonomy" id="320483"/>
    <lineage>
        <taxon>Bacteria</taxon>
        <taxon>Pseudomonadati</taxon>
        <taxon>Pseudomonadota</taxon>
        <taxon>Alphaproteobacteria</taxon>
        <taxon>Rickettsiales</taxon>
        <taxon>Anaplasmataceae</taxon>
        <taxon>Anaplasma</taxon>
    </lineage>
</organism>
<reference key="1">
    <citation type="journal article" date="2009" name="BMC Genomics">
        <title>Conservation in the face of diversity: multistrain analysis of an intracellular bacterium.</title>
        <authorList>
            <person name="Dark M.J."/>
            <person name="Herndon D.R."/>
            <person name="Kappmeyer L.S."/>
            <person name="Gonzales M.P."/>
            <person name="Nordeen E."/>
            <person name="Palmer G.H."/>
            <person name="Knowles D.P. Jr."/>
            <person name="Brayton K.A."/>
        </authorList>
    </citation>
    <scope>NUCLEOTIDE SEQUENCE [LARGE SCALE GENOMIC DNA]</scope>
    <source>
        <strain>Florida</strain>
    </source>
</reference>
<protein>
    <recommendedName>
        <fullName evidence="1">tRNA dimethylallyltransferase</fullName>
        <ecNumber evidence="1">2.5.1.75</ecNumber>
    </recommendedName>
    <alternativeName>
        <fullName evidence="1">Dimethylallyl diphosphate:tRNA dimethylallyltransferase</fullName>
        <shortName evidence="1">DMAPP:tRNA dimethylallyltransferase</shortName>
        <shortName evidence="1">DMATase</shortName>
    </alternativeName>
    <alternativeName>
        <fullName evidence="1">Isopentenyl-diphosphate:tRNA isopentenyltransferase</fullName>
        <shortName evidence="1">IPP transferase</shortName>
        <shortName evidence="1">IPPT</shortName>
        <shortName evidence="1">IPTase</shortName>
    </alternativeName>
</protein>
<name>MIAA_ANAMF</name>
<feature type="chain" id="PRO_0000377064" description="tRNA dimethylallyltransferase">
    <location>
        <begin position="1"/>
        <end position="305"/>
    </location>
</feature>
<feature type="region of interest" description="Interaction with substrate tRNA" evidence="1">
    <location>
        <begin position="34"/>
        <end position="37"/>
    </location>
</feature>
<feature type="binding site" evidence="1">
    <location>
        <begin position="9"/>
        <end position="16"/>
    </location>
    <ligand>
        <name>ATP</name>
        <dbReference type="ChEBI" id="CHEBI:30616"/>
    </ligand>
</feature>
<feature type="binding site" evidence="1">
    <location>
        <begin position="11"/>
        <end position="16"/>
    </location>
    <ligand>
        <name>substrate</name>
    </ligand>
</feature>
<feature type="site" description="Interaction with substrate tRNA" evidence="1">
    <location>
        <position position="99"/>
    </location>
</feature>
<feature type="site" description="Interaction with substrate tRNA" evidence="1">
    <location>
        <position position="121"/>
    </location>
</feature>
<comment type="function">
    <text evidence="1">Catalyzes the transfer of a dimethylallyl group onto the adenine at position 37 in tRNAs that read codons beginning with uridine, leading to the formation of N6-(dimethylallyl)adenosine (i(6)A).</text>
</comment>
<comment type="catalytic activity">
    <reaction evidence="1">
        <text>adenosine(37) in tRNA + dimethylallyl diphosphate = N(6)-dimethylallyladenosine(37) in tRNA + diphosphate</text>
        <dbReference type="Rhea" id="RHEA:26482"/>
        <dbReference type="Rhea" id="RHEA-COMP:10162"/>
        <dbReference type="Rhea" id="RHEA-COMP:10375"/>
        <dbReference type="ChEBI" id="CHEBI:33019"/>
        <dbReference type="ChEBI" id="CHEBI:57623"/>
        <dbReference type="ChEBI" id="CHEBI:74411"/>
        <dbReference type="ChEBI" id="CHEBI:74415"/>
        <dbReference type="EC" id="2.5.1.75"/>
    </reaction>
</comment>
<comment type="cofactor">
    <cofactor evidence="1">
        <name>Mg(2+)</name>
        <dbReference type="ChEBI" id="CHEBI:18420"/>
    </cofactor>
</comment>
<comment type="subunit">
    <text evidence="1">Monomer.</text>
</comment>
<comment type="similarity">
    <text evidence="1">Belongs to the IPP transferase family.</text>
</comment>
<keyword id="KW-0067">ATP-binding</keyword>
<keyword id="KW-0460">Magnesium</keyword>
<keyword id="KW-0547">Nucleotide-binding</keyword>
<keyword id="KW-1185">Reference proteome</keyword>
<keyword id="KW-0808">Transferase</keyword>
<keyword id="KW-0819">tRNA processing</keyword>
<proteinExistence type="inferred from homology"/>
<evidence type="ECO:0000255" key="1">
    <source>
        <dbReference type="HAMAP-Rule" id="MF_00185"/>
    </source>
</evidence>
<sequence>MHKLFILTGPTASGKSEVSKIVAERLGCTIINCDSKQIYQHVPTITDQAEYLRTNPQFGLYGYVHPSNSYSVGLWLEDAKREILLAWEKKSPAIVVGGSGLYISSLIYGLSEIPPADAHIRQKARALLSEVGNDTFFELLLRRDANVCKIDRRNSNQLLRAFEVFESTGVSIFSWRERCPKKRPFENCEVCVLFPPKEELHPKINSRLVDMINSSAVAEVEYLMSLNLPADAPIMKAIGVREVIEYLRGNISLPEAVEAAQRNTRQYAKRQYTWLRRQLPQDAQFLPTREEMVQHLVSRLTETEK</sequence>
<gene>
    <name evidence="1" type="primary">miaA</name>
    <name type="ordered locus">AMF_558</name>
</gene>
<accession>B9KIU4</accession>